<keyword id="KW-0963">Cytoplasm</keyword>
<keyword id="KW-0350">Heme biosynthesis</keyword>
<keyword id="KW-0408">Iron</keyword>
<keyword id="KW-0456">Lyase</keyword>
<keyword id="KW-0479">Metal-binding</keyword>
<keyword id="KW-0627">Porphyrin biosynthesis</keyword>
<accession>B0B858</accession>
<feature type="chain" id="PRO_1000116036" description="Ferrochelatase">
    <location>
        <begin position="1"/>
        <end position="314"/>
    </location>
</feature>
<feature type="binding site" evidence="1">
    <location>
        <position position="184"/>
    </location>
    <ligand>
        <name>Fe cation</name>
        <dbReference type="ChEBI" id="CHEBI:24875"/>
    </ligand>
</feature>
<feature type="binding site" evidence="1">
    <location>
        <position position="259"/>
    </location>
    <ligand>
        <name>Fe cation</name>
        <dbReference type="ChEBI" id="CHEBI:24875"/>
    </ligand>
</feature>
<comment type="function">
    <text evidence="1">Catalyzes the ferrous insertion into protoporphyrin IX.</text>
</comment>
<comment type="catalytic activity">
    <reaction evidence="1">
        <text>heme b + 2 H(+) = protoporphyrin IX + Fe(2+)</text>
        <dbReference type="Rhea" id="RHEA:22584"/>
        <dbReference type="ChEBI" id="CHEBI:15378"/>
        <dbReference type="ChEBI" id="CHEBI:29033"/>
        <dbReference type="ChEBI" id="CHEBI:57306"/>
        <dbReference type="ChEBI" id="CHEBI:60344"/>
        <dbReference type="EC" id="4.98.1.1"/>
    </reaction>
</comment>
<comment type="pathway">
    <text evidence="1">Porphyrin-containing compound metabolism; protoheme biosynthesis; protoheme from protoporphyrin-IX: step 1/1.</text>
</comment>
<comment type="subcellular location">
    <subcellularLocation>
        <location evidence="1">Cytoplasm</location>
    </subcellularLocation>
</comment>
<comment type="similarity">
    <text evidence="1">Belongs to the ferrochelatase family.</text>
</comment>
<organism>
    <name type="scientific">Chlamydia trachomatis serovar L2 (strain ATCC VR-902B / DSM 19102 / 434/Bu)</name>
    <dbReference type="NCBI Taxonomy" id="471472"/>
    <lineage>
        <taxon>Bacteria</taxon>
        <taxon>Pseudomonadati</taxon>
        <taxon>Chlamydiota</taxon>
        <taxon>Chlamydiia</taxon>
        <taxon>Chlamydiales</taxon>
        <taxon>Chlamydiaceae</taxon>
        <taxon>Chlamydia/Chlamydophila group</taxon>
        <taxon>Chlamydia</taxon>
    </lineage>
</organism>
<proteinExistence type="inferred from homology"/>
<protein>
    <recommendedName>
        <fullName evidence="1">Ferrochelatase</fullName>
        <ecNumber evidence="1">4.98.1.1</ecNumber>
    </recommendedName>
    <alternativeName>
        <fullName evidence="1">Heme synthase</fullName>
    </alternativeName>
    <alternativeName>
        <fullName evidence="1">Protoheme ferro-lyase</fullName>
    </alternativeName>
</protein>
<name>HEMH_CHLT2</name>
<reference key="1">
    <citation type="journal article" date="2008" name="Genome Res.">
        <title>Chlamydia trachomatis: genome sequence analysis of lymphogranuloma venereum isolates.</title>
        <authorList>
            <person name="Thomson N.R."/>
            <person name="Holden M.T.G."/>
            <person name="Carder C."/>
            <person name="Lennard N."/>
            <person name="Lockey S.J."/>
            <person name="Marsh P."/>
            <person name="Skipp P."/>
            <person name="O'Connor C.D."/>
            <person name="Goodhead I."/>
            <person name="Norbertzcak H."/>
            <person name="Harris B."/>
            <person name="Ormond D."/>
            <person name="Rance R."/>
            <person name="Quail M.A."/>
            <person name="Parkhill J."/>
            <person name="Stephens R.S."/>
            <person name="Clarke I.N."/>
        </authorList>
    </citation>
    <scope>NUCLEOTIDE SEQUENCE [LARGE SCALE GENOMIC DNA]</scope>
    <source>
        <strain>ATCC VR-902B / DSM 19102 / 434/Bu</strain>
    </source>
</reference>
<evidence type="ECO:0000255" key="1">
    <source>
        <dbReference type="HAMAP-Rule" id="MF_00323"/>
    </source>
</evidence>
<dbReference type="EC" id="4.98.1.1" evidence="1"/>
<dbReference type="EMBL" id="AM884176">
    <property type="protein sequence ID" value="CAP04184.1"/>
    <property type="molecule type" value="Genomic_DNA"/>
</dbReference>
<dbReference type="RefSeq" id="WP_009873848.1">
    <property type="nucleotide sequence ID" value="NC_010287.1"/>
</dbReference>
<dbReference type="RefSeq" id="YP_001654817.1">
    <property type="nucleotide sequence ID" value="NC_010287.1"/>
</dbReference>
<dbReference type="SMR" id="B0B858"/>
<dbReference type="KEGG" id="ctb:CTL0746"/>
<dbReference type="PATRIC" id="fig|471472.4.peg.802"/>
<dbReference type="HOGENOM" id="CLU_018884_1_0_0"/>
<dbReference type="UniPathway" id="UPA00252">
    <property type="reaction ID" value="UER00325"/>
</dbReference>
<dbReference type="Proteomes" id="UP001154402">
    <property type="component" value="Chromosome"/>
</dbReference>
<dbReference type="GO" id="GO:0005737">
    <property type="term" value="C:cytoplasm"/>
    <property type="evidence" value="ECO:0007669"/>
    <property type="project" value="UniProtKB-SubCell"/>
</dbReference>
<dbReference type="GO" id="GO:0004325">
    <property type="term" value="F:ferrochelatase activity"/>
    <property type="evidence" value="ECO:0007669"/>
    <property type="project" value="UniProtKB-UniRule"/>
</dbReference>
<dbReference type="GO" id="GO:0046872">
    <property type="term" value="F:metal ion binding"/>
    <property type="evidence" value="ECO:0007669"/>
    <property type="project" value="UniProtKB-KW"/>
</dbReference>
<dbReference type="GO" id="GO:0006783">
    <property type="term" value="P:heme biosynthetic process"/>
    <property type="evidence" value="ECO:0007669"/>
    <property type="project" value="UniProtKB-UniRule"/>
</dbReference>
<dbReference type="CDD" id="cd00419">
    <property type="entry name" value="Ferrochelatase_C"/>
    <property type="match status" value="1"/>
</dbReference>
<dbReference type="CDD" id="cd03411">
    <property type="entry name" value="Ferrochelatase_N"/>
    <property type="match status" value="1"/>
</dbReference>
<dbReference type="Gene3D" id="3.40.50.1400">
    <property type="match status" value="2"/>
</dbReference>
<dbReference type="HAMAP" id="MF_00323">
    <property type="entry name" value="Ferrochelatase"/>
    <property type="match status" value="1"/>
</dbReference>
<dbReference type="InterPro" id="IPR001015">
    <property type="entry name" value="Ferrochelatase"/>
</dbReference>
<dbReference type="InterPro" id="IPR019772">
    <property type="entry name" value="Ferrochelatase_AS"/>
</dbReference>
<dbReference type="InterPro" id="IPR033644">
    <property type="entry name" value="Ferrochelatase_C"/>
</dbReference>
<dbReference type="InterPro" id="IPR033659">
    <property type="entry name" value="Ferrochelatase_N"/>
</dbReference>
<dbReference type="NCBIfam" id="TIGR00109">
    <property type="entry name" value="hemH"/>
    <property type="match status" value="1"/>
</dbReference>
<dbReference type="PANTHER" id="PTHR11108">
    <property type="entry name" value="FERROCHELATASE"/>
    <property type="match status" value="1"/>
</dbReference>
<dbReference type="PANTHER" id="PTHR11108:SF1">
    <property type="entry name" value="FERROCHELATASE, MITOCHONDRIAL"/>
    <property type="match status" value="1"/>
</dbReference>
<dbReference type="Pfam" id="PF00762">
    <property type="entry name" value="Ferrochelatase"/>
    <property type="match status" value="1"/>
</dbReference>
<dbReference type="SUPFAM" id="SSF53800">
    <property type="entry name" value="Chelatase"/>
    <property type="match status" value="1"/>
</dbReference>
<dbReference type="PROSITE" id="PS00534">
    <property type="entry name" value="FERROCHELATASE"/>
    <property type="match status" value="1"/>
</dbReference>
<gene>
    <name evidence="1" type="primary">hemH</name>
    <name type="ordered locus">CTL0746</name>
</gene>
<sequence>MVTYLLANFGGPRTSQEIVSFLQALLTDRDVTGGMIPSVLHRPLFSYIAKRRAPHVARQYAYLGGGSPIFQDTERLAQNLSQELQASVIPFHRYLPETHRETLQALQESQGSIVGIPLFPHYTFAVTGSIIRFFLQHLPEKPISWITQFGVHPQFVSCMQQHIRDCLAAQQIAVEDCYFLFSVHGLPQRHIRLGDPYAQQCQASFEALRGELEGEIAFQSKFGIGKWLDPSTQEVCQSLRTKKRYIVIVPFGFVSDHIETLYEIDHLYVPILLQKEYRVVRIPAINASSRWVSSLAAIVRSSPQETSLEPLLMP</sequence>